<sequence>MSSFQLPKLSYDYDELEPYIDSNTLSIHHGKHHATYVNNLNAALENYSELHNKSLEELLCNLETLPKEIVTAVRNNGGGHYCHSLFWEVMSPRGGGEPNGDVAKVIDYYFNTFDNLKDQLSKAAISRFGSGYGWLVLDGEELSVMSTPNQDTPLQEGKIPLLVIDVWEHAYYLKYQNRRPEFVTNWWHTVNWDRVNEKYLQAIQSQKH</sequence>
<comment type="function">
    <text>Destroys superoxide anion radicals which are normally produced within the cells and which are toxic to biological systems.</text>
</comment>
<comment type="catalytic activity">
    <reaction>
        <text>2 superoxide + 2 H(+) = H2O2 + O2</text>
        <dbReference type="Rhea" id="RHEA:20696"/>
        <dbReference type="ChEBI" id="CHEBI:15378"/>
        <dbReference type="ChEBI" id="CHEBI:15379"/>
        <dbReference type="ChEBI" id="CHEBI:16240"/>
        <dbReference type="ChEBI" id="CHEBI:18421"/>
        <dbReference type="EC" id="1.15.1.1"/>
    </reaction>
</comment>
<comment type="cofactor">
    <cofactor evidence="1">
        <name>Mn(2+)</name>
        <dbReference type="ChEBI" id="CHEBI:29035"/>
    </cofactor>
    <text evidence="1">Binds 1 Mn(2+) ion per subunit.</text>
</comment>
<comment type="subunit">
    <text evidence="1">Homodimer.</text>
</comment>
<comment type="similarity">
    <text evidence="2">Belongs to the iron/manganese superoxide dismutase family.</text>
</comment>
<reference key="1">
    <citation type="journal article" date="2003" name="Nature">
        <title>The genome sequence of Bacillus anthracis Ames and comparison to closely related bacteria.</title>
        <authorList>
            <person name="Read T.D."/>
            <person name="Peterson S.N."/>
            <person name="Tourasse N.J."/>
            <person name="Baillie L.W."/>
            <person name="Paulsen I.T."/>
            <person name="Nelson K.E."/>
            <person name="Tettelin H."/>
            <person name="Fouts D.E."/>
            <person name="Eisen J.A."/>
            <person name="Gill S.R."/>
            <person name="Holtzapple E.K."/>
            <person name="Okstad O.A."/>
            <person name="Helgason E."/>
            <person name="Rilstone J."/>
            <person name="Wu M."/>
            <person name="Kolonay J.F."/>
            <person name="Beanan M.J."/>
            <person name="Dodson R.J."/>
            <person name="Brinkac L.M."/>
            <person name="Gwinn M.L."/>
            <person name="DeBoy R.T."/>
            <person name="Madpu R."/>
            <person name="Daugherty S.C."/>
            <person name="Durkin A.S."/>
            <person name="Haft D.H."/>
            <person name="Nelson W.C."/>
            <person name="Peterson J.D."/>
            <person name="Pop M."/>
            <person name="Khouri H.M."/>
            <person name="Radune D."/>
            <person name="Benton J.L."/>
            <person name="Mahamoud Y."/>
            <person name="Jiang L."/>
            <person name="Hance I.R."/>
            <person name="Weidman J.F."/>
            <person name="Berry K.J."/>
            <person name="Plaut R.D."/>
            <person name="Wolf A.M."/>
            <person name="Watkins K.L."/>
            <person name="Nierman W.C."/>
            <person name="Hazen A."/>
            <person name="Cline R.T."/>
            <person name="Redmond C."/>
            <person name="Thwaite J.E."/>
            <person name="White O."/>
            <person name="Salzberg S.L."/>
            <person name="Thomason B."/>
            <person name="Friedlander A.M."/>
            <person name="Koehler T.M."/>
            <person name="Hanna P.C."/>
            <person name="Kolstoe A.-B."/>
            <person name="Fraser C.M."/>
        </authorList>
    </citation>
    <scope>NUCLEOTIDE SEQUENCE [LARGE SCALE GENOMIC DNA]</scope>
    <source>
        <strain>Ames / isolate Porton</strain>
    </source>
</reference>
<reference key="2">
    <citation type="journal article" date="2009" name="J. Bacteriol.">
        <title>The complete genome sequence of Bacillus anthracis Ames 'Ancestor'.</title>
        <authorList>
            <person name="Ravel J."/>
            <person name="Jiang L."/>
            <person name="Stanley S.T."/>
            <person name="Wilson M.R."/>
            <person name="Decker R.S."/>
            <person name="Read T.D."/>
            <person name="Worsham P."/>
            <person name="Keim P.S."/>
            <person name="Salzberg S.L."/>
            <person name="Fraser-Liggett C.M."/>
            <person name="Rasko D.A."/>
        </authorList>
    </citation>
    <scope>NUCLEOTIDE SEQUENCE [LARGE SCALE GENOMIC DNA]</scope>
    <source>
        <strain>Ames ancestor</strain>
    </source>
</reference>
<reference key="3">
    <citation type="submission" date="2004-01" db="EMBL/GenBank/DDBJ databases">
        <title>Complete genome sequence of Bacillus anthracis Sterne.</title>
        <authorList>
            <person name="Brettin T.S."/>
            <person name="Bruce D."/>
            <person name="Challacombe J.F."/>
            <person name="Gilna P."/>
            <person name="Han C."/>
            <person name="Hill K."/>
            <person name="Hitchcock P."/>
            <person name="Jackson P."/>
            <person name="Keim P."/>
            <person name="Longmire J."/>
            <person name="Lucas S."/>
            <person name="Okinaka R."/>
            <person name="Richardson P."/>
            <person name="Rubin E."/>
            <person name="Tice H."/>
        </authorList>
    </citation>
    <scope>NUCLEOTIDE SEQUENCE [LARGE SCALE GENOMIC DNA]</scope>
    <source>
        <strain>Sterne</strain>
    </source>
</reference>
<proteinExistence type="evidence at protein level"/>
<feature type="chain" id="PRO_0000160013" description="Superoxide dismutase [Mn] 2">
    <location>
        <begin position="1"/>
        <end position="208"/>
    </location>
</feature>
<feature type="binding site" evidence="1">
    <location>
        <position position="28"/>
    </location>
    <ligand>
        <name>Mn(2+)</name>
        <dbReference type="ChEBI" id="CHEBI:29035"/>
    </ligand>
</feature>
<feature type="binding site" evidence="1">
    <location>
        <position position="83"/>
    </location>
    <ligand>
        <name>Mn(2+)</name>
        <dbReference type="ChEBI" id="CHEBI:29035"/>
    </ligand>
</feature>
<feature type="binding site" evidence="1">
    <location>
        <position position="165"/>
    </location>
    <ligand>
        <name>Mn(2+)</name>
        <dbReference type="ChEBI" id="CHEBI:29035"/>
    </ligand>
</feature>
<feature type="binding site" evidence="1">
    <location>
        <position position="169"/>
    </location>
    <ligand>
        <name>Mn(2+)</name>
        <dbReference type="ChEBI" id="CHEBI:29035"/>
    </ligand>
</feature>
<feature type="turn" evidence="3">
    <location>
        <begin position="13"/>
        <end position="19"/>
    </location>
</feature>
<feature type="helix" evidence="3">
    <location>
        <begin position="22"/>
        <end position="30"/>
    </location>
</feature>
<feature type="helix" evidence="3">
    <location>
        <begin position="32"/>
        <end position="44"/>
    </location>
</feature>
<feature type="helix" evidence="3">
    <location>
        <begin position="48"/>
        <end position="50"/>
    </location>
</feature>
<feature type="helix" evidence="3">
    <location>
        <begin position="55"/>
        <end position="60"/>
    </location>
</feature>
<feature type="helix" evidence="3">
    <location>
        <begin position="62"/>
        <end position="64"/>
    </location>
</feature>
<feature type="turn" evidence="3">
    <location>
        <begin position="67"/>
        <end position="69"/>
    </location>
</feature>
<feature type="helix" evidence="3">
    <location>
        <begin position="70"/>
        <end position="88"/>
    </location>
</feature>
<feature type="helix" evidence="3">
    <location>
        <begin position="100"/>
        <end position="110"/>
    </location>
</feature>
<feature type="helix" evidence="3">
    <location>
        <begin position="113"/>
        <end position="125"/>
    </location>
</feature>
<feature type="strand" evidence="3">
    <location>
        <begin position="129"/>
        <end position="138"/>
    </location>
</feature>
<feature type="strand" evidence="3">
    <location>
        <begin position="141"/>
        <end position="148"/>
    </location>
</feature>
<feature type="helix" evidence="3">
    <location>
        <begin position="153"/>
        <end position="156"/>
    </location>
</feature>
<feature type="strand" evidence="3">
    <location>
        <begin position="159"/>
        <end position="165"/>
    </location>
</feature>
<feature type="helix" evidence="3">
    <location>
        <begin position="168"/>
        <end position="170"/>
    </location>
</feature>
<feature type="helix" evidence="3">
    <location>
        <begin position="172"/>
        <end position="175"/>
    </location>
</feature>
<feature type="helix" evidence="3">
    <location>
        <begin position="179"/>
        <end position="186"/>
    </location>
</feature>
<feature type="helix" evidence="3">
    <location>
        <begin position="187"/>
        <end position="189"/>
    </location>
</feature>
<feature type="helix" evidence="3">
    <location>
        <begin position="192"/>
        <end position="202"/>
    </location>
</feature>
<organism>
    <name type="scientific">Bacillus anthracis</name>
    <dbReference type="NCBI Taxonomy" id="1392"/>
    <lineage>
        <taxon>Bacteria</taxon>
        <taxon>Bacillati</taxon>
        <taxon>Bacillota</taxon>
        <taxon>Bacilli</taxon>
        <taxon>Bacillales</taxon>
        <taxon>Bacillaceae</taxon>
        <taxon>Bacillus</taxon>
        <taxon>Bacillus cereus group</taxon>
    </lineage>
</organism>
<keyword id="KW-0002">3D-structure</keyword>
<keyword id="KW-0464">Manganese</keyword>
<keyword id="KW-0479">Metal-binding</keyword>
<keyword id="KW-0560">Oxidoreductase</keyword>
<keyword id="KW-1185">Reference proteome</keyword>
<dbReference type="EC" id="1.15.1.1"/>
<dbReference type="EMBL" id="AE016879">
    <property type="protein sequence ID" value="AAP29328.1"/>
    <property type="molecule type" value="Genomic_DNA"/>
</dbReference>
<dbReference type="EMBL" id="AE017334">
    <property type="protein sequence ID" value="AAT34855.1"/>
    <property type="molecule type" value="Genomic_DNA"/>
</dbReference>
<dbReference type="EMBL" id="AE017225">
    <property type="protein sequence ID" value="AAT57587.1"/>
    <property type="molecule type" value="Genomic_DNA"/>
</dbReference>
<dbReference type="RefSeq" id="NP_847842.1">
    <property type="nucleotide sequence ID" value="NC_003997.3"/>
</dbReference>
<dbReference type="RefSeq" id="YP_031537.1">
    <property type="nucleotide sequence ID" value="NC_005945.1"/>
</dbReference>
<dbReference type="PDB" id="1XRE">
    <property type="method" value="X-ray"/>
    <property type="resolution" value="1.80 A"/>
    <property type="chains" value="A/B=1-208"/>
</dbReference>
<dbReference type="PDBsum" id="1XRE"/>
<dbReference type="SMR" id="Q81JK8"/>
<dbReference type="STRING" id="261594.GBAA_5696"/>
<dbReference type="DNASU" id="1085438"/>
<dbReference type="GeneID" id="45025271"/>
<dbReference type="KEGG" id="ban:BA_5696"/>
<dbReference type="KEGG" id="banh:HYU01_27805"/>
<dbReference type="KEGG" id="bar:GBAA_5696"/>
<dbReference type="KEGG" id="bat:BAS5300"/>
<dbReference type="PATRIC" id="fig|198094.11.peg.5658"/>
<dbReference type="eggNOG" id="COG0605">
    <property type="taxonomic scope" value="Bacteria"/>
</dbReference>
<dbReference type="HOGENOM" id="CLU_031625_0_1_9"/>
<dbReference type="OMA" id="HNQFWEM"/>
<dbReference type="OrthoDB" id="9803125at2"/>
<dbReference type="EvolutionaryTrace" id="Q81JK8"/>
<dbReference type="Proteomes" id="UP000000427">
    <property type="component" value="Chromosome"/>
</dbReference>
<dbReference type="Proteomes" id="UP000000594">
    <property type="component" value="Chromosome"/>
</dbReference>
<dbReference type="GO" id="GO:0005737">
    <property type="term" value="C:cytoplasm"/>
    <property type="evidence" value="ECO:0007669"/>
    <property type="project" value="TreeGrafter"/>
</dbReference>
<dbReference type="GO" id="GO:0046872">
    <property type="term" value="F:metal ion binding"/>
    <property type="evidence" value="ECO:0007669"/>
    <property type="project" value="UniProtKB-KW"/>
</dbReference>
<dbReference type="GO" id="GO:0004784">
    <property type="term" value="F:superoxide dismutase activity"/>
    <property type="evidence" value="ECO:0007669"/>
    <property type="project" value="UniProtKB-EC"/>
</dbReference>
<dbReference type="FunFam" id="1.10.287.990:FF:000001">
    <property type="entry name" value="Superoxide dismutase"/>
    <property type="match status" value="1"/>
</dbReference>
<dbReference type="FunFam" id="3.55.40.20:FF:000006">
    <property type="entry name" value="Superoxide dismutase"/>
    <property type="match status" value="1"/>
</dbReference>
<dbReference type="Gene3D" id="1.10.287.990">
    <property type="entry name" value="Fe,Mn superoxide dismutase (SOD) domain"/>
    <property type="match status" value="1"/>
</dbReference>
<dbReference type="Gene3D" id="3.55.40.20">
    <property type="entry name" value="Iron/manganese superoxide dismutase, C-terminal domain"/>
    <property type="match status" value="1"/>
</dbReference>
<dbReference type="InterPro" id="IPR001189">
    <property type="entry name" value="Mn/Fe_SOD"/>
</dbReference>
<dbReference type="InterPro" id="IPR019833">
    <property type="entry name" value="Mn/Fe_SOD_BS"/>
</dbReference>
<dbReference type="InterPro" id="IPR019832">
    <property type="entry name" value="Mn/Fe_SOD_C"/>
</dbReference>
<dbReference type="InterPro" id="IPR019831">
    <property type="entry name" value="Mn/Fe_SOD_N"/>
</dbReference>
<dbReference type="InterPro" id="IPR036324">
    <property type="entry name" value="Mn/Fe_SOD_N_sf"/>
</dbReference>
<dbReference type="InterPro" id="IPR036314">
    <property type="entry name" value="SOD_C_sf"/>
</dbReference>
<dbReference type="PANTHER" id="PTHR43595">
    <property type="entry name" value="37S RIBOSOMAL PROTEIN S26, MITOCHONDRIAL"/>
    <property type="match status" value="1"/>
</dbReference>
<dbReference type="PANTHER" id="PTHR43595:SF2">
    <property type="entry name" value="SMALL RIBOSOMAL SUBUNIT PROTEIN MS42"/>
    <property type="match status" value="1"/>
</dbReference>
<dbReference type="Pfam" id="PF02777">
    <property type="entry name" value="Sod_Fe_C"/>
    <property type="match status" value="1"/>
</dbReference>
<dbReference type="Pfam" id="PF00081">
    <property type="entry name" value="Sod_Fe_N"/>
    <property type="match status" value="1"/>
</dbReference>
<dbReference type="PIRSF" id="PIRSF000349">
    <property type="entry name" value="SODismutase"/>
    <property type="match status" value="1"/>
</dbReference>
<dbReference type="PRINTS" id="PR01703">
    <property type="entry name" value="MNSODISMTASE"/>
</dbReference>
<dbReference type="SUPFAM" id="SSF54719">
    <property type="entry name" value="Fe,Mn superoxide dismutase (SOD), C-terminal domain"/>
    <property type="match status" value="1"/>
</dbReference>
<dbReference type="SUPFAM" id="SSF46609">
    <property type="entry name" value="Fe,Mn superoxide dismutase (SOD), N-terminal domain"/>
    <property type="match status" value="1"/>
</dbReference>
<dbReference type="PROSITE" id="PS00088">
    <property type="entry name" value="SOD_MN"/>
    <property type="match status" value="1"/>
</dbReference>
<name>SODM2_BACAN</name>
<gene>
    <name type="primary">sodA2</name>
    <name type="synonym">sodA-2</name>
    <name type="ordered locus">BA_5696</name>
    <name type="ordered locus">GBAA_5696</name>
    <name type="ordered locus">BAS5300</name>
</gene>
<accession>Q81JK8</accession>
<accession>Q6HQ51</accession>
<accession>Q6KJJ4</accession>
<protein>
    <recommendedName>
        <fullName>Superoxide dismutase [Mn] 2</fullName>
        <ecNumber>1.15.1.1</ecNumber>
    </recommendedName>
</protein>
<evidence type="ECO:0000250" key="1"/>
<evidence type="ECO:0000305" key="2"/>
<evidence type="ECO:0007829" key="3">
    <source>
        <dbReference type="PDB" id="1XRE"/>
    </source>
</evidence>